<dbReference type="EMBL" id="AF139758">
    <property type="protein sequence ID" value="AAG00067.1"/>
    <property type="molecule type" value="Genomic_RNA"/>
</dbReference>
<dbReference type="RefSeq" id="NP_690892.1">
    <property type="nucleotide sequence ID" value="NC_004182.1"/>
</dbReference>
<dbReference type="GeneID" id="993310"/>
<dbReference type="KEGG" id="vg:993310"/>
<dbReference type="Proteomes" id="UP000001675">
    <property type="component" value="Genome"/>
</dbReference>
<dbReference type="GO" id="GO:0016740">
    <property type="term" value="F:transferase activity"/>
    <property type="evidence" value="ECO:0007669"/>
    <property type="project" value="UniProtKB-KW"/>
</dbReference>
<name>CAPSD_CTFVL</name>
<accession>Q9ENL4</accession>
<protein>
    <recommendedName>
        <fullName>Inner capsid protein VP2</fullName>
    </recommendedName>
</protein>
<feature type="chain" id="PRO_0000403190" description="Inner capsid protein VP2">
    <location>
        <begin position="1"/>
        <end position="1209"/>
    </location>
</feature>
<feature type="region of interest" description="Disordered" evidence="2">
    <location>
        <begin position="1"/>
        <end position="53"/>
    </location>
</feature>
<feature type="compositionally biased region" description="Basic and acidic residues" evidence="2">
    <location>
        <begin position="1"/>
        <end position="17"/>
    </location>
</feature>
<feature type="compositionally biased region" description="Basic and acidic residues" evidence="2">
    <location>
        <begin position="26"/>
        <end position="53"/>
    </location>
</feature>
<keyword id="KW-0167">Capsid protein</keyword>
<keyword id="KW-0175">Coiled coil</keyword>
<keyword id="KW-1153">Inner capsid protein</keyword>
<keyword id="KW-1185">Reference proteome</keyword>
<keyword id="KW-1141">T=2 icosahedral capsid protein</keyword>
<keyword id="KW-0946">Virion</keyword>
<comment type="function">
    <text evidence="1">Inner capsid protein that self-assembles to form an icosahedral capsid with a T=2 symmetry, which consists of 120 copies of VP2, with channels at each of its five-fold vertices. This capsid constitutes the innermost concentric layer of the viral mature particle.</text>
</comment>
<comment type="subunit">
    <text evidence="1">Homodecamer; each decamer is made up of two conformers of VP2, called VP2A and VP2B. 12 homodecamers assemble to form an icosahedral capsid.</text>
</comment>
<comment type="subcellular location">
    <subcellularLocation>
        <location evidence="1">Virion</location>
    </subcellularLocation>
    <text evidence="1">Found in the inner capsid (120 copies).</text>
</comment>
<comment type="miscellaneous">
    <text evidence="3">Function inferred by structural homology with BTV-fold inner capsid family.</text>
</comment>
<comment type="similarity">
    <text evidence="3">Belongs to the turreted BTV-fold inner capsid family.</text>
</comment>
<organismHost>
    <name type="scientific">Callospermophilus lateralis</name>
    <name type="common">Golden-mantled ground squirrel</name>
    <name type="synonym">Spermophilus lateralis</name>
    <dbReference type="NCBI Taxonomy" id="76772"/>
</organismHost>
<organismHost>
    <name type="scientific">Dermacentor andersoni</name>
    <name type="common">Rocky mountain wood tick</name>
    <dbReference type="NCBI Taxonomy" id="34620"/>
</organismHost>
<organismHost>
    <name type="scientific">Erethizon dorsatum</name>
    <name type="common">North American porcupine</name>
    <name type="synonym">Hystrix dorsata</name>
    <dbReference type="NCBI Taxonomy" id="34844"/>
</organismHost>
<organismHost>
    <name type="scientific">Homo sapiens</name>
    <name type="common">Human</name>
    <dbReference type="NCBI Taxonomy" id="9606"/>
</organismHost>
<organismHost>
    <name type="scientific">Neotoma cinerea</name>
    <name type="common">Bushy-tailed woodrat</name>
    <name type="synonym">Mus cinereus</name>
    <dbReference type="NCBI Taxonomy" id="105147"/>
</organismHost>
<organismHost>
    <name type="scientific">Peromyscus maniculatus</name>
    <name type="common">North American deer mouse</name>
    <dbReference type="NCBI Taxonomy" id="10042"/>
</organismHost>
<proteinExistence type="inferred from homology"/>
<evidence type="ECO:0000250" key="1">
    <source>
        <dbReference type="UniProtKB" id="P15024"/>
    </source>
</evidence>
<evidence type="ECO:0000256" key="2">
    <source>
        <dbReference type="SAM" id="MobiDB-lite"/>
    </source>
</evidence>
<evidence type="ECO:0000305" key="3"/>
<organism>
    <name type="scientific">Colorado tick fever virus (strain USA/Florio N-7180)</name>
    <name type="common">CTFV</name>
    <dbReference type="NCBI Taxonomy" id="648168"/>
    <lineage>
        <taxon>Viruses</taxon>
        <taxon>Riboviria</taxon>
        <taxon>Orthornavirae</taxon>
        <taxon>Duplornaviricota</taxon>
        <taxon>Resentoviricetes</taxon>
        <taxon>Reovirales</taxon>
        <taxon>Spinareoviridae</taxon>
        <taxon>Coltivirus</taxon>
        <taxon>Colorado tick fever coltivirus</taxon>
    </lineage>
</organism>
<sequence length="1209" mass="136981">MSARTKEKTKDKTKNDEQTVSTEASAADRNDREKSSSSEPEDNAKETLTKKDSSSKKSVDVLAAMIEQKVQMSGSAGLGEFFGRMRPEITDAFFAALEREADVSKVVPSSLSKLDDGQVVDLLSVGEERTLSQSLFQLEVVTSIPHFYQLTAKQIGALGAQGGYLKAYHGEQVYPFIDPVANQFGRGFDLAYVRINTSGQGVELFIDPFDFDKVSCKVGGESLTGIGLSNAVGVDEITYDDVKTPEQMMEFVVLLIAGAAKMGRFCSSGVDARRRRKLFKTWVRRPVSDNFRHVQGWLLEDDYENYPHVPEALTVFSEYQWFAREVADNMTDNGLGTSVQMEDGPNIESFFNRKYREAAICNLDFITAEAHANVMEELQNEKMNVSAYVDLLQSCQMGIFDIEGDTDTIKLKVYMREVEDYEAELTRMMLFPGDQLYVDCLRTAALVSPNIRQFILSVLIQQATSRVGLIELLPVAEMTASLTSRDNISVSHNMALTLAIGEWKELLRLTNPQQICQKIVCDIMAPFVDGLRMEDSLGVPTPSKLVFSLLGAKVALILTPNLYDYNLHLKAHLVTMILSCFFPDQYGALIASRGYGHDVTGNRIDSIRDGERTKKNCRFATYTVLDPIPNGPPDRTRRKWLLMKRVQEWLLRNDLVRRREIRDIIYRPYANVLRLPGQTYLPRRQAAGAPLPCEVLLNDAIAILEEYRTVFHHPNDRNQGPQDRHALTTLSNLLRWYTRGFAEWFHWVYRPLYLQIALHPIIFWSHRLGQGVWRQFPAVREDRERRFDNHLEGVPFDSPVIAAFEPDVALNPFTLRQGADLLGRVHAQGSTFRGGAYDSASVILLSEYEALYRMTDSEGMVDEYIKTLMASRQLLEGLRLVAELSTGELLRDTPILDYIRTAFCEGRFPSHIFFKILNLFGVKINHGVLAQVGERSIEHRLRGDYRVYYPRPGFLDPALEFIPDRIVVVDPVRPSVRRNVKLIMDAVFDPEFGMIKMRKGVTFSLRPTNDLTFSSFHEIPPIQVEMTGNVNYVYDSETARTRAEYDVQVRWEAPGRIITMNLLVTSSYEILSSMEDILGREVRAFSFVVQDVSKFSGIYYDFMLSAVRKEHAIVWFPNLRGILHHHAISIEKVETCFKAAELAQFSSFLSLRPTALIKLNVVQTTNIRGGILPPSVSKPILPCEGVHPSFIFALMSMWRRIGFAGLPSR</sequence>
<reference key="1">
    <citation type="journal article" date="2000" name="Biochem. Biophys. Res. Commun.">
        <title>Sequence determination and analysis of the full-length genome of colorado tick fever virus, the type species of genus Coltivirus (Family Reoviridae).</title>
        <authorList>
            <person name="Attoui H."/>
            <person name="Billoir F."/>
            <person name="Biagini P."/>
            <person name="Cantaloube J.F."/>
            <person name="de Chesse R."/>
            <person name="de Micco P."/>
            <person name="de Lamballerie X."/>
        </authorList>
    </citation>
    <scope>NUCLEOTIDE SEQUENCE [GENOMIC RNA]</scope>
</reference>